<protein>
    <recommendedName>
        <fullName evidence="1">Ribose-5-phosphate isomerase A</fullName>
        <ecNumber evidence="1">5.3.1.6</ecNumber>
    </recommendedName>
    <alternativeName>
        <fullName evidence="1">Phosphoriboisomerase A</fullName>
        <shortName evidence="1">PRI</shortName>
    </alternativeName>
</protein>
<name>RPIA_NEIMB</name>
<gene>
    <name evidence="1" type="primary">rpiA</name>
    <name type="ordered locus">NMB1511</name>
</gene>
<evidence type="ECO:0000255" key="1">
    <source>
        <dbReference type="HAMAP-Rule" id="MF_00170"/>
    </source>
</evidence>
<feature type="chain" id="PRO_0000158439" description="Ribose-5-phosphate isomerase A">
    <location>
        <begin position="1"/>
        <end position="223"/>
    </location>
</feature>
<feature type="active site" description="Proton acceptor" evidence="1">
    <location>
        <position position="104"/>
    </location>
</feature>
<feature type="binding site" evidence="1">
    <location>
        <begin position="29"/>
        <end position="32"/>
    </location>
    <ligand>
        <name>substrate</name>
    </ligand>
</feature>
<feature type="binding site" evidence="1">
    <location>
        <begin position="82"/>
        <end position="85"/>
    </location>
    <ligand>
        <name>substrate</name>
    </ligand>
</feature>
<feature type="binding site" evidence="1">
    <location>
        <begin position="95"/>
        <end position="98"/>
    </location>
    <ligand>
        <name>substrate</name>
    </ligand>
</feature>
<feature type="binding site" evidence="1">
    <location>
        <position position="122"/>
    </location>
    <ligand>
        <name>substrate</name>
    </ligand>
</feature>
<sequence length="223" mass="23904">MTTQDELKRIAAEKAVEFVPENEYIGIGTGSTINFFIEALGKSGKKIKGAVSTSKKSGELLAQYDIPVVSLNEVSGLAVYIDGADEVNHALQMIKGGGGAHLNEKIVASASEKFICIADESKYVSRLGKFPLPVEVVESARSLVSRKLLAMGGQPELRIGYTTFYGNQIVDVHGLNIDQPLTMEDEINKITGVLENGIFARDAADVLILGTEEGAKVIYPCQG</sequence>
<reference key="1">
    <citation type="journal article" date="2000" name="Science">
        <title>Complete genome sequence of Neisseria meningitidis serogroup B strain MC58.</title>
        <authorList>
            <person name="Tettelin H."/>
            <person name="Saunders N.J."/>
            <person name="Heidelberg J.F."/>
            <person name="Jeffries A.C."/>
            <person name="Nelson K.E."/>
            <person name="Eisen J.A."/>
            <person name="Ketchum K.A."/>
            <person name="Hood D.W."/>
            <person name="Peden J.F."/>
            <person name="Dodson R.J."/>
            <person name="Nelson W.C."/>
            <person name="Gwinn M.L."/>
            <person name="DeBoy R.T."/>
            <person name="Peterson J.D."/>
            <person name="Hickey E.K."/>
            <person name="Haft D.H."/>
            <person name="Salzberg S.L."/>
            <person name="White O."/>
            <person name="Fleischmann R.D."/>
            <person name="Dougherty B.A."/>
            <person name="Mason T.M."/>
            <person name="Ciecko A."/>
            <person name="Parksey D.S."/>
            <person name="Blair E."/>
            <person name="Cittone H."/>
            <person name="Clark E.B."/>
            <person name="Cotton M.D."/>
            <person name="Utterback T.R."/>
            <person name="Khouri H.M."/>
            <person name="Qin H."/>
            <person name="Vamathevan J.J."/>
            <person name="Gill J."/>
            <person name="Scarlato V."/>
            <person name="Masignani V."/>
            <person name="Pizza M."/>
            <person name="Grandi G."/>
            <person name="Sun L."/>
            <person name="Smith H.O."/>
            <person name="Fraser C.M."/>
            <person name="Moxon E.R."/>
            <person name="Rappuoli R."/>
            <person name="Venter J.C."/>
        </authorList>
    </citation>
    <scope>NUCLEOTIDE SEQUENCE [LARGE SCALE GENOMIC DNA]</scope>
    <source>
        <strain>ATCC BAA-335 / MC58</strain>
    </source>
</reference>
<keyword id="KW-0413">Isomerase</keyword>
<keyword id="KW-1185">Reference proteome</keyword>
<dbReference type="EC" id="5.3.1.6" evidence="1"/>
<dbReference type="EMBL" id="AE002098">
    <property type="protein sequence ID" value="AAF41867.1"/>
    <property type="molecule type" value="Genomic_DNA"/>
</dbReference>
<dbReference type="PIR" id="C81076">
    <property type="entry name" value="C81076"/>
</dbReference>
<dbReference type="RefSeq" id="NP_274519.1">
    <property type="nucleotide sequence ID" value="NC_003112.2"/>
</dbReference>
<dbReference type="RefSeq" id="WP_002225069.1">
    <property type="nucleotide sequence ID" value="NC_003112.2"/>
</dbReference>
<dbReference type="SMR" id="Q9JYM6"/>
<dbReference type="FunCoup" id="Q9JYM6">
    <property type="interactions" value="401"/>
</dbReference>
<dbReference type="STRING" id="122586.NMB1511"/>
<dbReference type="PaxDb" id="122586-NMB1511"/>
<dbReference type="KEGG" id="nme:NMB1511"/>
<dbReference type="PATRIC" id="fig|122586.8.peg.1915"/>
<dbReference type="HOGENOM" id="CLU_056590_1_1_4"/>
<dbReference type="InParanoid" id="Q9JYM6"/>
<dbReference type="OrthoDB" id="5870696at2"/>
<dbReference type="UniPathway" id="UPA00115">
    <property type="reaction ID" value="UER00412"/>
</dbReference>
<dbReference type="Proteomes" id="UP000000425">
    <property type="component" value="Chromosome"/>
</dbReference>
<dbReference type="GO" id="GO:0005829">
    <property type="term" value="C:cytosol"/>
    <property type="evidence" value="ECO:0000318"/>
    <property type="project" value="GO_Central"/>
</dbReference>
<dbReference type="GO" id="GO:0004751">
    <property type="term" value="F:ribose-5-phosphate isomerase activity"/>
    <property type="evidence" value="ECO:0000318"/>
    <property type="project" value="GO_Central"/>
</dbReference>
<dbReference type="GO" id="GO:0006014">
    <property type="term" value="P:D-ribose metabolic process"/>
    <property type="evidence" value="ECO:0000318"/>
    <property type="project" value="GO_Central"/>
</dbReference>
<dbReference type="GO" id="GO:0009052">
    <property type="term" value="P:pentose-phosphate shunt, non-oxidative branch"/>
    <property type="evidence" value="ECO:0000318"/>
    <property type="project" value="GO_Central"/>
</dbReference>
<dbReference type="CDD" id="cd01398">
    <property type="entry name" value="RPI_A"/>
    <property type="match status" value="1"/>
</dbReference>
<dbReference type="FunFam" id="3.40.50.1360:FF:000001">
    <property type="entry name" value="Ribose-5-phosphate isomerase A"/>
    <property type="match status" value="1"/>
</dbReference>
<dbReference type="Gene3D" id="3.30.70.260">
    <property type="match status" value="1"/>
</dbReference>
<dbReference type="Gene3D" id="3.40.50.1360">
    <property type="match status" value="1"/>
</dbReference>
<dbReference type="HAMAP" id="MF_00170">
    <property type="entry name" value="Rib_5P_isom_A"/>
    <property type="match status" value="1"/>
</dbReference>
<dbReference type="InterPro" id="IPR037171">
    <property type="entry name" value="NagB/RpiA_transferase-like"/>
</dbReference>
<dbReference type="InterPro" id="IPR020672">
    <property type="entry name" value="Ribose5P_isomerase_typA_subgr"/>
</dbReference>
<dbReference type="InterPro" id="IPR004788">
    <property type="entry name" value="Ribose5P_isomerase_type_A"/>
</dbReference>
<dbReference type="NCBIfam" id="NF001924">
    <property type="entry name" value="PRK00702.1"/>
    <property type="match status" value="1"/>
</dbReference>
<dbReference type="NCBIfam" id="TIGR00021">
    <property type="entry name" value="rpiA"/>
    <property type="match status" value="1"/>
</dbReference>
<dbReference type="PANTHER" id="PTHR11934">
    <property type="entry name" value="RIBOSE-5-PHOSPHATE ISOMERASE"/>
    <property type="match status" value="1"/>
</dbReference>
<dbReference type="PANTHER" id="PTHR11934:SF0">
    <property type="entry name" value="RIBOSE-5-PHOSPHATE ISOMERASE"/>
    <property type="match status" value="1"/>
</dbReference>
<dbReference type="Pfam" id="PF06026">
    <property type="entry name" value="Rib_5-P_isom_A"/>
    <property type="match status" value="1"/>
</dbReference>
<dbReference type="SUPFAM" id="SSF75445">
    <property type="entry name" value="D-ribose-5-phosphate isomerase (RpiA), lid domain"/>
    <property type="match status" value="1"/>
</dbReference>
<dbReference type="SUPFAM" id="SSF100950">
    <property type="entry name" value="NagB/RpiA/CoA transferase-like"/>
    <property type="match status" value="1"/>
</dbReference>
<comment type="function">
    <text evidence="1">Catalyzes the reversible conversion of ribose-5-phosphate to ribulose 5-phosphate.</text>
</comment>
<comment type="catalytic activity">
    <reaction evidence="1">
        <text>aldehydo-D-ribose 5-phosphate = D-ribulose 5-phosphate</text>
        <dbReference type="Rhea" id="RHEA:14657"/>
        <dbReference type="ChEBI" id="CHEBI:58121"/>
        <dbReference type="ChEBI" id="CHEBI:58273"/>
        <dbReference type="EC" id="5.3.1.6"/>
    </reaction>
</comment>
<comment type="pathway">
    <text evidence="1">Carbohydrate degradation; pentose phosphate pathway; D-ribose 5-phosphate from D-ribulose 5-phosphate (non-oxidative stage): step 1/1.</text>
</comment>
<comment type="subunit">
    <text evidence="1">Homodimer.</text>
</comment>
<comment type="similarity">
    <text evidence="1">Belongs to the ribose 5-phosphate isomerase family.</text>
</comment>
<organism>
    <name type="scientific">Neisseria meningitidis serogroup B (strain ATCC BAA-335 / MC58)</name>
    <dbReference type="NCBI Taxonomy" id="122586"/>
    <lineage>
        <taxon>Bacteria</taxon>
        <taxon>Pseudomonadati</taxon>
        <taxon>Pseudomonadota</taxon>
        <taxon>Betaproteobacteria</taxon>
        <taxon>Neisseriales</taxon>
        <taxon>Neisseriaceae</taxon>
        <taxon>Neisseria</taxon>
    </lineage>
</organism>
<accession>Q9JYM6</accession>
<proteinExistence type="inferred from homology"/>